<feature type="chain" id="PRO_0000283606" description="Ammonium transporter Rh type B">
    <location>
        <begin position="1"/>
        <end position="459"/>
    </location>
</feature>
<feature type="topological domain" description="Cytoplasmic" evidence="2">
    <location>
        <begin position="1"/>
        <end position="10"/>
    </location>
</feature>
<feature type="transmembrane region" description="Helical" evidence="2">
    <location>
        <begin position="11"/>
        <end position="31"/>
    </location>
</feature>
<feature type="topological domain" description="Extracellular" evidence="2">
    <location>
        <begin position="32"/>
        <end position="58"/>
    </location>
</feature>
<feature type="transmembrane region" description="Helical" evidence="2">
    <location>
        <begin position="59"/>
        <end position="79"/>
    </location>
</feature>
<feature type="topological domain" description="Cytoplasmic" evidence="2">
    <location>
        <begin position="80"/>
        <end position="87"/>
    </location>
</feature>
<feature type="transmembrane region" description="Helical" evidence="2">
    <location>
        <begin position="88"/>
        <end position="108"/>
    </location>
</feature>
<feature type="topological domain" description="Extracellular" evidence="2">
    <location>
        <begin position="109"/>
        <end position="121"/>
    </location>
</feature>
<feature type="transmembrane region" description="Helical" evidence="2">
    <location>
        <begin position="122"/>
        <end position="142"/>
    </location>
</feature>
<feature type="topological domain" description="Cytoplasmic" evidence="2">
    <location>
        <begin position="143"/>
        <end position="149"/>
    </location>
</feature>
<feature type="transmembrane region" description="Helical" evidence="2">
    <location>
        <begin position="150"/>
        <end position="170"/>
    </location>
</feature>
<feature type="topological domain" description="Extracellular" evidence="2">
    <location>
        <begin position="171"/>
        <end position="176"/>
    </location>
</feature>
<feature type="transmembrane region" description="Helical" evidence="2">
    <location>
        <begin position="177"/>
        <end position="197"/>
    </location>
</feature>
<feature type="topological domain" description="Cytoplasmic" evidence="2">
    <location>
        <begin position="198"/>
        <end position="216"/>
    </location>
</feature>
<feature type="transmembrane region" description="Helical" evidence="2">
    <location>
        <begin position="217"/>
        <end position="237"/>
    </location>
</feature>
<feature type="topological domain" description="Extracellular" evidence="2">
    <location>
        <begin position="238"/>
        <end position="248"/>
    </location>
</feature>
<feature type="transmembrane region" description="Helical" evidence="2">
    <location>
        <begin position="249"/>
        <end position="269"/>
    </location>
</feature>
<feature type="topological domain" description="Cytoplasmic" evidence="2">
    <location>
        <begin position="270"/>
        <end position="274"/>
    </location>
</feature>
<feature type="transmembrane region" description="Helical" evidence="2">
    <location>
        <begin position="275"/>
        <end position="295"/>
    </location>
</feature>
<feature type="topological domain" description="Extracellular" evidence="2">
    <location>
        <position position="296"/>
    </location>
</feature>
<feature type="transmembrane region" description="Helical" evidence="2">
    <location>
        <begin position="297"/>
        <end position="317"/>
    </location>
</feature>
<feature type="topological domain" description="Cytoplasmic" evidence="2">
    <location>
        <begin position="318"/>
        <end position="340"/>
    </location>
</feature>
<feature type="transmembrane region" description="Helical" evidence="2">
    <location>
        <begin position="341"/>
        <end position="361"/>
    </location>
</feature>
<feature type="topological domain" description="Extracellular" evidence="2">
    <location>
        <begin position="362"/>
        <end position="392"/>
    </location>
</feature>
<feature type="transmembrane region" description="Helical" evidence="2">
    <location>
        <begin position="393"/>
        <end position="413"/>
    </location>
</feature>
<feature type="topological domain" description="Cytoplasmic" evidence="2">
    <location>
        <begin position="414"/>
        <end position="459"/>
    </location>
</feature>
<feature type="region of interest" description="Disordered" evidence="3">
    <location>
        <begin position="440"/>
        <end position="459"/>
    </location>
</feature>
<feature type="glycosylation site" description="N-linked (GlcNAc...) asparagine" evidence="2">
    <location>
        <position position="45"/>
    </location>
</feature>
<reference key="1">
    <citation type="journal article" date="2005" name="Proc. Natl. Acad. Sci. U.S.A.">
        <title>Evolutionary conservation and diversification of Rh family genes and proteins.</title>
        <authorList>
            <person name="Huang C.-H."/>
            <person name="Peng J."/>
        </authorList>
    </citation>
    <scope>NUCLEOTIDE SEQUENCE [MRNA]</scope>
</reference>
<reference key="2">
    <citation type="journal article" date="2013" name="Nature">
        <title>The zebrafish reference genome sequence and its relationship to the human genome.</title>
        <authorList>
            <person name="Howe K."/>
            <person name="Clark M.D."/>
            <person name="Torroja C.F."/>
            <person name="Torrance J."/>
            <person name="Berthelot C."/>
            <person name="Muffato M."/>
            <person name="Collins J.E."/>
            <person name="Humphray S."/>
            <person name="McLaren K."/>
            <person name="Matthews L."/>
            <person name="McLaren S."/>
            <person name="Sealy I."/>
            <person name="Caccamo M."/>
            <person name="Churcher C."/>
            <person name="Scott C."/>
            <person name="Barrett J.C."/>
            <person name="Koch R."/>
            <person name="Rauch G.J."/>
            <person name="White S."/>
            <person name="Chow W."/>
            <person name="Kilian B."/>
            <person name="Quintais L.T."/>
            <person name="Guerra-Assuncao J.A."/>
            <person name="Zhou Y."/>
            <person name="Gu Y."/>
            <person name="Yen J."/>
            <person name="Vogel J.H."/>
            <person name="Eyre T."/>
            <person name="Redmond S."/>
            <person name="Banerjee R."/>
            <person name="Chi J."/>
            <person name="Fu B."/>
            <person name="Langley E."/>
            <person name="Maguire S.F."/>
            <person name="Laird G.K."/>
            <person name="Lloyd D."/>
            <person name="Kenyon E."/>
            <person name="Donaldson S."/>
            <person name="Sehra H."/>
            <person name="Almeida-King J."/>
            <person name="Loveland J."/>
            <person name="Trevanion S."/>
            <person name="Jones M."/>
            <person name="Quail M."/>
            <person name="Willey D."/>
            <person name="Hunt A."/>
            <person name="Burton J."/>
            <person name="Sims S."/>
            <person name="McLay K."/>
            <person name="Plumb B."/>
            <person name="Davis J."/>
            <person name="Clee C."/>
            <person name="Oliver K."/>
            <person name="Clark R."/>
            <person name="Riddle C."/>
            <person name="Elliot D."/>
            <person name="Threadgold G."/>
            <person name="Harden G."/>
            <person name="Ware D."/>
            <person name="Begum S."/>
            <person name="Mortimore B."/>
            <person name="Kerry G."/>
            <person name="Heath P."/>
            <person name="Phillimore B."/>
            <person name="Tracey A."/>
            <person name="Corby N."/>
            <person name="Dunn M."/>
            <person name="Johnson C."/>
            <person name="Wood J."/>
            <person name="Clark S."/>
            <person name="Pelan S."/>
            <person name="Griffiths G."/>
            <person name="Smith M."/>
            <person name="Glithero R."/>
            <person name="Howden P."/>
            <person name="Barker N."/>
            <person name="Lloyd C."/>
            <person name="Stevens C."/>
            <person name="Harley J."/>
            <person name="Holt K."/>
            <person name="Panagiotidis G."/>
            <person name="Lovell J."/>
            <person name="Beasley H."/>
            <person name="Henderson C."/>
            <person name="Gordon D."/>
            <person name="Auger K."/>
            <person name="Wright D."/>
            <person name="Collins J."/>
            <person name="Raisen C."/>
            <person name="Dyer L."/>
            <person name="Leung K."/>
            <person name="Robertson L."/>
            <person name="Ambridge K."/>
            <person name="Leongamornlert D."/>
            <person name="McGuire S."/>
            <person name="Gilderthorp R."/>
            <person name="Griffiths C."/>
            <person name="Manthravadi D."/>
            <person name="Nichol S."/>
            <person name="Barker G."/>
            <person name="Whitehead S."/>
            <person name="Kay M."/>
            <person name="Brown J."/>
            <person name="Murnane C."/>
            <person name="Gray E."/>
            <person name="Humphries M."/>
            <person name="Sycamore N."/>
            <person name="Barker D."/>
            <person name="Saunders D."/>
            <person name="Wallis J."/>
            <person name="Babbage A."/>
            <person name="Hammond S."/>
            <person name="Mashreghi-Mohammadi M."/>
            <person name="Barr L."/>
            <person name="Martin S."/>
            <person name="Wray P."/>
            <person name="Ellington A."/>
            <person name="Matthews N."/>
            <person name="Ellwood M."/>
            <person name="Woodmansey R."/>
            <person name="Clark G."/>
            <person name="Cooper J."/>
            <person name="Tromans A."/>
            <person name="Grafham D."/>
            <person name="Skuce C."/>
            <person name="Pandian R."/>
            <person name="Andrews R."/>
            <person name="Harrison E."/>
            <person name="Kimberley A."/>
            <person name="Garnett J."/>
            <person name="Fosker N."/>
            <person name="Hall R."/>
            <person name="Garner P."/>
            <person name="Kelly D."/>
            <person name="Bird C."/>
            <person name="Palmer S."/>
            <person name="Gehring I."/>
            <person name="Berger A."/>
            <person name="Dooley C.M."/>
            <person name="Ersan-Urun Z."/>
            <person name="Eser C."/>
            <person name="Geiger H."/>
            <person name="Geisler M."/>
            <person name="Karotki L."/>
            <person name="Kirn A."/>
            <person name="Konantz J."/>
            <person name="Konantz M."/>
            <person name="Oberlander M."/>
            <person name="Rudolph-Geiger S."/>
            <person name="Teucke M."/>
            <person name="Lanz C."/>
            <person name="Raddatz G."/>
            <person name="Osoegawa K."/>
            <person name="Zhu B."/>
            <person name="Rapp A."/>
            <person name="Widaa S."/>
            <person name="Langford C."/>
            <person name="Yang F."/>
            <person name="Schuster S.C."/>
            <person name="Carter N.P."/>
            <person name="Harrow J."/>
            <person name="Ning Z."/>
            <person name="Herrero J."/>
            <person name="Searle S.M."/>
            <person name="Enright A."/>
            <person name="Geisler R."/>
            <person name="Plasterk R.H."/>
            <person name="Lee C."/>
            <person name="Westerfield M."/>
            <person name="de Jong P.J."/>
            <person name="Zon L.I."/>
            <person name="Postlethwait J.H."/>
            <person name="Nusslein-Volhard C."/>
            <person name="Hubbard T.J."/>
            <person name="Roest Crollius H."/>
            <person name="Rogers J."/>
            <person name="Stemple D.L."/>
        </authorList>
    </citation>
    <scope>NUCLEOTIDE SEQUENCE [LARGE SCALE GENOMIC DNA]</scope>
    <source>
        <strain>Tuebingen</strain>
    </source>
</reference>
<reference key="3">
    <citation type="submission" date="2003-03" db="EMBL/GenBank/DDBJ databases">
        <authorList>
            <consortium name="NIH - Zebrafish Gene Collection (ZGC) project"/>
        </authorList>
    </citation>
    <scope>NUCLEOTIDE SEQUENCE [LARGE SCALE MRNA]</scope>
    <source>
        <strain>SJD</strain>
    </source>
</reference>
<proteinExistence type="evidence at transcript level"/>
<accession>Q7T070</accession>
<accession>Q7ZWH6</accession>
<gene>
    <name type="primary">rhbg</name>
    <name type="ORF">si:dkey-235h8.2</name>
    <name type="ORF">zgc:56354</name>
</gene>
<sequence>MAESTNLRLRLPLICIILEVILIILFGVLVEYNDDTDAKKWNKNNSTDPATNEFYYRYPSFQDVHVMIFVGFGFLMTFLQRYGFSSMGFNFLIAAFSLQWATLMQGFFHGMHHGKIHVGVTSMINADFCTGAVLISFGAVLGKTSPVQLLVMAILEVTLFAVNEYILLSILGANDAGGSMTIHTFGAYFGLMVTRILHRPNLDKSKHKNSSVYHSDLFAMIGTIFLWMFWPSFNSAITQYGDPQHRTAANTYYSLAACTLATFGFSSLVNPEGKLDMVHIQNAALAGGVAVGTAGEMMLTPFGSMIVGFLAGTISVLGYKYLTPFMESKLKIQDTCGIHNLHGMPGILGAIVGAVTAALASRDVYGNGLDKVFLEAADNSQWSAQTKGGFQAISLAVTLGIALIGGLITGFLLKLPIYGTPPDTQCFEDAVYWEVPGEEEDHHELNEVSTQNEVEKLNS</sequence>
<comment type="function">
    <text evidence="1">Functions as an ammonia transporter. May play a role in the elimination of ammonia in the gill (By similarity).</text>
</comment>
<comment type="subcellular location">
    <subcellularLocation>
        <location evidence="1">Basolateral cell membrane</location>
        <topology evidence="1">Multi-pass membrane protein</topology>
    </subcellularLocation>
    <subcellularLocation>
        <location evidence="1">Cytoplasmic vesicle membrane</location>
        <topology evidence="1">Multi-pass membrane protein</topology>
    </subcellularLocation>
</comment>
<comment type="similarity">
    <text evidence="4">Belongs to the ammonium transporter (TC 2.A.49) family. Rh subfamily.</text>
</comment>
<comment type="sequence caution" evidence="4">
    <conflict type="frameshift">
        <sequence resource="EMBL-CDS" id="AAH49405"/>
    </conflict>
</comment>
<keyword id="KW-0924">Ammonia transport</keyword>
<keyword id="KW-1003">Cell membrane</keyword>
<keyword id="KW-0968">Cytoplasmic vesicle</keyword>
<keyword id="KW-0325">Glycoprotein</keyword>
<keyword id="KW-0472">Membrane</keyword>
<keyword id="KW-1185">Reference proteome</keyword>
<keyword id="KW-0812">Transmembrane</keyword>
<keyword id="KW-1133">Transmembrane helix</keyword>
<keyword id="KW-0813">Transport</keyword>
<protein>
    <recommendedName>
        <fullName>Ammonium transporter Rh type B</fullName>
    </recommendedName>
    <alternativeName>
        <fullName>Rhesus blood group family type B glycoprotein</fullName>
        <shortName>Rh family type B glycoprotein</shortName>
        <shortName>Rh type B glycoprotein</shortName>
    </alternativeName>
</protein>
<evidence type="ECO:0000250" key="1"/>
<evidence type="ECO:0000255" key="2"/>
<evidence type="ECO:0000256" key="3">
    <source>
        <dbReference type="SAM" id="MobiDB-lite"/>
    </source>
</evidence>
<evidence type="ECO:0000305" key="4"/>
<organism>
    <name type="scientific">Danio rerio</name>
    <name type="common">Zebrafish</name>
    <name type="synonym">Brachydanio rerio</name>
    <dbReference type="NCBI Taxonomy" id="7955"/>
    <lineage>
        <taxon>Eukaryota</taxon>
        <taxon>Metazoa</taxon>
        <taxon>Chordata</taxon>
        <taxon>Craniata</taxon>
        <taxon>Vertebrata</taxon>
        <taxon>Euteleostomi</taxon>
        <taxon>Actinopterygii</taxon>
        <taxon>Neopterygii</taxon>
        <taxon>Teleostei</taxon>
        <taxon>Ostariophysi</taxon>
        <taxon>Cypriniformes</taxon>
        <taxon>Danionidae</taxon>
        <taxon>Danioninae</taxon>
        <taxon>Danio</taxon>
    </lineage>
</organism>
<dbReference type="EMBL" id="AF529360">
    <property type="protein sequence ID" value="AAQ09527.1"/>
    <property type="molecule type" value="mRNA"/>
</dbReference>
<dbReference type="EMBL" id="CR848047">
    <property type="protein sequence ID" value="CAM12965.1"/>
    <property type="molecule type" value="Genomic_DNA"/>
</dbReference>
<dbReference type="EMBL" id="BC049405">
    <property type="protein sequence ID" value="AAH49405.1"/>
    <property type="status" value="ALT_FRAME"/>
    <property type="molecule type" value="mRNA"/>
</dbReference>
<dbReference type="RefSeq" id="NP_956365.2">
    <property type="nucleotide sequence ID" value="NM_200071.3"/>
</dbReference>
<dbReference type="SMR" id="Q7T070"/>
<dbReference type="FunCoup" id="Q7T070">
    <property type="interactions" value="96"/>
</dbReference>
<dbReference type="STRING" id="7955.ENSDARP00000058869"/>
<dbReference type="GlyCosmos" id="Q7T070">
    <property type="glycosylation" value="1 site, No reported glycans"/>
</dbReference>
<dbReference type="PaxDb" id="7955-ENSDARP00000058869"/>
<dbReference type="Ensembl" id="ENSDART00000058870">
    <property type="protein sequence ID" value="ENSDARP00000058869"/>
    <property type="gene ID" value="ENSDARG00000009018"/>
</dbReference>
<dbReference type="GeneID" id="337596"/>
<dbReference type="KEGG" id="dre:337596"/>
<dbReference type="AGR" id="ZFIN:ZDB-GENE-030131-9542"/>
<dbReference type="CTD" id="57127"/>
<dbReference type="ZFIN" id="ZDB-GENE-030131-9542">
    <property type="gene designation" value="rhbg"/>
</dbReference>
<dbReference type="eggNOG" id="KOG3796">
    <property type="taxonomic scope" value="Eukaryota"/>
</dbReference>
<dbReference type="HOGENOM" id="CLU_021386_0_0_1"/>
<dbReference type="InParanoid" id="Q7T070"/>
<dbReference type="OMA" id="DNIYWEV"/>
<dbReference type="OrthoDB" id="534912at2759"/>
<dbReference type="PhylomeDB" id="Q7T070"/>
<dbReference type="TreeFam" id="TF314450"/>
<dbReference type="Reactome" id="R-DRE-444411">
    <property type="pathway name" value="Rhesus glycoproteins mediate ammonium transport"/>
</dbReference>
<dbReference type="PRO" id="PR:Q7T070"/>
<dbReference type="Proteomes" id="UP000000437">
    <property type="component" value="Chromosome 16"/>
</dbReference>
<dbReference type="Bgee" id="ENSDARG00000009018">
    <property type="expression patterns" value="Expressed in pharyngeal gill and 25 other cell types or tissues"/>
</dbReference>
<dbReference type="GO" id="GO:0016323">
    <property type="term" value="C:basolateral plasma membrane"/>
    <property type="evidence" value="ECO:0007669"/>
    <property type="project" value="UniProtKB-SubCell"/>
</dbReference>
<dbReference type="GO" id="GO:0030659">
    <property type="term" value="C:cytoplasmic vesicle membrane"/>
    <property type="evidence" value="ECO:0007669"/>
    <property type="project" value="UniProtKB-SubCell"/>
</dbReference>
<dbReference type="GO" id="GO:0005886">
    <property type="term" value="C:plasma membrane"/>
    <property type="evidence" value="ECO:0000318"/>
    <property type="project" value="GO_Central"/>
</dbReference>
<dbReference type="GO" id="GO:0008519">
    <property type="term" value="F:ammonium channel activity"/>
    <property type="evidence" value="ECO:0000318"/>
    <property type="project" value="GO_Central"/>
</dbReference>
<dbReference type="GO" id="GO:0097272">
    <property type="term" value="P:ammonium homeostasis"/>
    <property type="evidence" value="ECO:0000315"/>
    <property type="project" value="ZFIN"/>
</dbReference>
<dbReference type="GO" id="GO:0072488">
    <property type="term" value="P:ammonium transmembrane transport"/>
    <property type="evidence" value="ECO:0000315"/>
    <property type="project" value="ZFIN"/>
</dbReference>
<dbReference type="FunFam" id="1.10.3430.10:FF:000001">
    <property type="entry name" value="Ammonium transporter Rh type C"/>
    <property type="match status" value="1"/>
</dbReference>
<dbReference type="Gene3D" id="1.10.3430.10">
    <property type="entry name" value="Ammonium transporter AmtB like domains"/>
    <property type="match status" value="1"/>
</dbReference>
<dbReference type="InterPro" id="IPR029020">
    <property type="entry name" value="Ammonium/urea_transptr"/>
</dbReference>
<dbReference type="InterPro" id="IPR024041">
    <property type="entry name" value="NH4_transpt_AmtB-like_dom"/>
</dbReference>
<dbReference type="InterPro" id="IPR002229">
    <property type="entry name" value="RhesusRHD"/>
</dbReference>
<dbReference type="PANTHER" id="PTHR11730">
    <property type="entry name" value="AMMONIUM TRANSPORTER"/>
    <property type="match status" value="1"/>
</dbReference>
<dbReference type="PANTHER" id="PTHR11730:SF42">
    <property type="entry name" value="AMMONIUM TRANSPORTER RH TYPE B"/>
    <property type="match status" value="1"/>
</dbReference>
<dbReference type="Pfam" id="PF00909">
    <property type="entry name" value="Ammonium_transp"/>
    <property type="match status" value="1"/>
</dbReference>
<dbReference type="PRINTS" id="PR00342">
    <property type="entry name" value="RHESUSRHD"/>
</dbReference>
<dbReference type="SUPFAM" id="SSF111352">
    <property type="entry name" value="Ammonium transporter"/>
    <property type="match status" value="1"/>
</dbReference>
<name>RHBG_DANRE</name>